<evidence type="ECO:0000255" key="1">
    <source>
        <dbReference type="HAMAP-Rule" id="MF_00145"/>
    </source>
</evidence>
<comment type="catalytic activity">
    <reaction evidence="1">
        <text>(2R)-3-phosphoglycerate + ATP = (2R)-3-phospho-glyceroyl phosphate + ADP</text>
        <dbReference type="Rhea" id="RHEA:14801"/>
        <dbReference type="ChEBI" id="CHEBI:30616"/>
        <dbReference type="ChEBI" id="CHEBI:57604"/>
        <dbReference type="ChEBI" id="CHEBI:58272"/>
        <dbReference type="ChEBI" id="CHEBI:456216"/>
        <dbReference type="EC" id="2.7.2.3"/>
    </reaction>
</comment>
<comment type="pathway">
    <text evidence="1">Carbohydrate degradation; glycolysis; pyruvate from D-glyceraldehyde 3-phosphate: step 2/5.</text>
</comment>
<comment type="subunit">
    <text evidence="1">Monomer.</text>
</comment>
<comment type="subcellular location">
    <subcellularLocation>
        <location evidence="1">Cytoplasm</location>
    </subcellularLocation>
</comment>
<comment type="similarity">
    <text evidence="1">Belongs to the phosphoglycerate kinase family.</text>
</comment>
<dbReference type="EC" id="2.7.2.3" evidence="1"/>
<dbReference type="EMBL" id="AM999887">
    <property type="protein sequence ID" value="CAQ54943.1"/>
    <property type="molecule type" value="Genomic_DNA"/>
</dbReference>
<dbReference type="SMR" id="B3CM25"/>
<dbReference type="KEGG" id="wpi:WP0835"/>
<dbReference type="eggNOG" id="COG0126">
    <property type="taxonomic scope" value="Bacteria"/>
</dbReference>
<dbReference type="HOGENOM" id="CLU_025427_0_2_5"/>
<dbReference type="UniPathway" id="UPA00109">
    <property type="reaction ID" value="UER00185"/>
</dbReference>
<dbReference type="Proteomes" id="UP000008814">
    <property type="component" value="Chromosome"/>
</dbReference>
<dbReference type="GO" id="GO:0005829">
    <property type="term" value="C:cytosol"/>
    <property type="evidence" value="ECO:0007669"/>
    <property type="project" value="TreeGrafter"/>
</dbReference>
<dbReference type="GO" id="GO:0043531">
    <property type="term" value="F:ADP binding"/>
    <property type="evidence" value="ECO:0007669"/>
    <property type="project" value="TreeGrafter"/>
</dbReference>
<dbReference type="GO" id="GO:0005524">
    <property type="term" value="F:ATP binding"/>
    <property type="evidence" value="ECO:0007669"/>
    <property type="project" value="UniProtKB-KW"/>
</dbReference>
<dbReference type="GO" id="GO:0004618">
    <property type="term" value="F:phosphoglycerate kinase activity"/>
    <property type="evidence" value="ECO:0007669"/>
    <property type="project" value="UniProtKB-UniRule"/>
</dbReference>
<dbReference type="GO" id="GO:0006094">
    <property type="term" value="P:gluconeogenesis"/>
    <property type="evidence" value="ECO:0007669"/>
    <property type="project" value="TreeGrafter"/>
</dbReference>
<dbReference type="GO" id="GO:0006096">
    <property type="term" value="P:glycolytic process"/>
    <property type="evidence" value="ECO:0007669"/>
    <property type="project" value="UniProtKB-UniRule"/>
</dbReference>
<dbReference type="FunFam" id="3.40.50.1260:FF:000006">
    <property type="entry name" value="Phosphoglycerate kinase"/>
    <property type="match status" value="1"/>
</dbReference>
<dbReference type="FunFam" id="3.40.50.1260:FF:000031">
    <property type="entry name" value="Phosphoglycerate kinase 1"/>
    <property type="match status" value="1"/>
</dbReference>
<dbReference type="Gene3D" id="3.40.50.1260">
    <property type="entry name" value="Phosphoglycerate kinase, N-terminal domain"/>
    <property type="match status" value="2"/>
</dbReference>
<dbReference type="HAMAP" id="MF_00145">
    <property type="entry name" value="Phosphoglyc_kinase"/>
    <property type="match status" value="1"/>
</dbReference>
<dbReference type="InterPro" id="IPR001576">
    <property type="entry name" value="Phosphoglycerate_kinase"/>
</dbReference>
<dbReference type="InterPro" id="IPR015911">
    <property type="entry name" value="Phosphoglycerate_kinase_CS"/>
</dbReference>
<dbReference type="InterPro" id="IPR015824">
    <property type="entry name" value="Phosphoglycerate_kinase_N"/>
</dbReference>
<dbReference type="InterPro" id="IPR036043">
    <property type="entry name" value="Phosphoglycerate_kinase_sf"/>
</dbReference>
<dbReference type="PANTHER" id="PTHR11406">
    <property type="entry name" value="PHOSPHOGLYCERATE KINASE"/>
    <property type="match status" value="1"/>
</dbReference>
<dbReference type="PANTHER" id="PTHR11406:SF23">
    <property type="entry name" value="PHOSPHOGLYCERATE KINASE 1, CHLOROPLASTIC-RELATED"/>
    <property type="match status" value="1"/>
</dbReference>
<dbReference type="Pfam" id="PF00162">
    <property type="entry name" value="PGK"/>
    <property type="match status" value="1"/>
</dbReference>
<dbReference type="PIRSF" id="PIRSF000724">
    <property type="entry name" value="Pgk"/>
    <property type="match status" value="1"/>
</dbReference>
<dbReference type="PRINTS" id="PR00477">
    <property type="entry name" value="PHGLYCKINASE"/>
</dbReference>
<dbReference type="SUPFAM" id="SSF53748">
    <property type="entry name" value="Phosphoglycerate kinase"/>
    <property type="match status" value="1"/>
</dbReference>
<dbReference type="PROSITE" id="PS00111">
    <property type="entry name" value="PGLYCERATE_KINASE"/>
    <property type="match status" value="1"/>
</dbReference>
<reference key="1">
    <citation type="journal article" date="2008" name="Mol. Biol. Evol.">
        <title>Genome evolution of Wolbachia strain wPip from the Culex pipiens group.</title>
        <authorList>
            <person name="Klasson L."/>
            <person name="Walker T."/>
            <person name="Sebaihia M."/>
            <person name="Sanders M.J."/>
            <person name="Quail M.A."/>
            <person name="Lord A."/>
            <person name="Sanders S."/>
            <person name="Earl J."/>
            <person name="O'Neill S.L."/>
            <person name="Thomson N."/>
            <person name="Sinkins S.P."/>
            <person name="Parkhill J."/>
        </authorList>
    </citation>
    <scope>NUCLEOTIDE SEQUENCE [LARGE SCALE GENOMIC DNA]</scope>
    <source>
        <strain>wPip</strain>
    </source>
</reference>
<accession>B3CM25</accession>
<protein>
    <recommendedName>
        <fullName evidence="1">Phosphoglycerate kinase</fullName>
        <ecNumber evidence="1">2.7.2.3</ecNumber>
    </recommendedName>
</protein>
<organism>
    <name type="scientific">Wolbachia pipientis subsp. Culex pipiens (strain wPip)</name>
    <dbReference type="NCBI Taxonomy" id="570417"/>
    <lineage>
        <taxon>Bacteria</taxon>
        <taxon>Pseudomonadati</taxon>
        <taxon>Pseudomonadota</taxon>
        <taxon>Alphaproteobacteria</taxon>
        <taxon>Rickettsiales</taxon>
        <taxon>Anaplasmataceae</taxon>
        <taxon>Wolbachieae</taxon>
        <taxon>Wolbachia</taxon>
    </lineage>
</organism>
<feature type="chain" id="PRO_1000096391" description="Phosphoglycerate kinase">
    <location>
        <begin position="1"/>
        <end position="396"/>
    </location>
</feature>
<feature type="binding site" evidence="1">
    <location>
        <begin position="22"/>
        <end position="24"/>
    </location>
    <ligand>
        <name>substrate</name>
    </ligand>
</feature>
<feature type="binding site" evidence="1">
    <location>
        <position position="37"/>
    </location>
    <ligand>
        <name>substrate</name>
    </ligand>
</feature>
<feature type="binding site" evidence="1">
    <location>
        <begin position="60"/>
        <end position="63"/>
    </location>
    <ligand>
        <name>substrate</name>
    </ligand>
</feature>
<feature type="binding site" evidence="1">
    <location>
        <position position="118"/>
    </location>
    <ligand>
        <name>substrate</name>
    </ligand>
</feature>
<feature type="binding site" evidence="1">
    <location>
        <position position="151"/>
    </location>
    <ligand>
        <name>substrate</name>
    </ligand>
</feature>
<feature type="binding site" evidence="1">
    <location>
        <position position="201"/>
    </location>
    <ligand>
        <name>ATP</name>
        <dbReference type="ChEBI" id="CHEBI:30616"/>
    </ligand>
</feature>
<feature type="binding site" evidence="1">
    <location>
        <position position="322"/>
    </location>
    <ligand>
        <name>ATP</name>
        <dbReference type="ChEBI" id="CHEBI:30616"/>
    </ligand>
</feature>
<feature type="binding site" evidence="1">
    <location>
        <begin position="352"/>
        <end position="355"/>
    </location>
    <ligand>
        <name>ATP</name>
        <dbReference type="ChEBI" id="CHEBI:30616"/>
    </ligand>
</feature>
<sequence length="396" mass="43059">MINVPSIESCDFHNKNVLLRVDFNVPIKNGRICDATRILRALPTIQYLANAGAKVIVISHFGRPKAKDSNLSLKNVVETLSRLLSKEVKFIDDCIGERVQRAINAMDGGDIILLENLRFYKEEEQNDSNFAKQLASLADIYINDAFSCSHRAHASISRITEFLPSYAGFCLQDELKYLEQAISFDAKPITAIVGGAKISTKIKMLIKLAEKVDYLILGGAIANNFLLFNKVNIGKSFFQNGVDDLLHDIVETANKNNCKIVVPEDVLVAVNSDYSTGVLRKIESILDGDIILDIGPQTLSTISGIIASSKTLLWNGPIGVFEHSAFANGTVEVMRVVSDLTHEGKLTSVIGGGDSLSAINTAGLADKDFTYISTGGGAFLSWLSGDEMPGLRSTLD</sequence>
<proteinExistence type="inferred from homology"/>
<name>PGK_WOLPP</name>
<keyword id="KW-0067">ATP-binding</keyword>
<keyword id="KW-0963">Cytoplasm</keyword>
<keyword id="KW-0324">Glycolysis</keyword>
<keyword id="KW-0418">Kinase</keyword>
<keyword id="KW-0547">Nucleotide-binding</keyword>
<keyword id="KW-0808">Transferase</keyword>
<gene>
    <name evidence="1" type="primary">pgk</name>
    <name type="ordered locus">WP0835</name>
</gene>